<comment type="function">
    <text evidence="1">Promotes mitochondrial protein synthesis. May act as a fidelity factor of the translation reaction, by catalyzing a one-codon backward translocation of tRNAs on improperly translocated ribosomes. Binds to mitochondrial ribosomes in a GTP-dependent manner.</text>
</comment>
<comment type="catalytic activity">
    <reaction evidence="1">
        <text>GTP + H2O = GDP + phosphate + H(+)</text>
        <dbReference type="Rhea" id="RHEA:19669"/>
        <dbReference type="ChEBI" id="CHEBI:15377"/>
        <dbReference type="ChEBI" id="CHEBI:15378"/>
        <dbReference type="ChEBI" id="CHEBI:37565"/>
        <dbReference type="ChEBI" id="CHEBI:43474"/>
        <dbReference type="ChEBI" id="CHEBI:58189"/>
    </reaction>
</comment>
<comment type="subcellular location">
    <subcellularLocation>
        <location evidence="1">Mitochondrion inner membrane</location>
        <topology evidence="1">Peripheral membrane protein</topology>
        <orientation evidence="1">Matrix side</orientation>
    </subcellularLocation>
</comment>
<comment type="similarity">
    <text evidence="2">Belongs to the TRAFAC class translation factor GTPase superfamily. Classic translation factor GTPase family. LepA subfamily.</text>
</comment>
<accession>C0SHD5</accession>
<reference key="1">
    <citation type="journal article" date="2011" name="PLoS Genet.">
        <title>Comparative genomic analysis of human fungal pathogens causing paracoccidioidomycosis.</title>
        <authorList>
            <person name="Desjardins C.A."/>
            <person name="Champion M.D."/>
            <person name="Holder J.W."/>
            <person name="Muszewska A."/>
            <person name="Goldberg J."/>
            <person name="Bailao A.M."/>
            <person name="Brigido M.M."/>
            <person name="Ferreira M.E."/>
            <person name="Garcia A.M."/>
            <person name="Grynberg M."/>
            <person name="Gujja S."/>
            <person name="Heiman D.I."/>
            <person name="Henn M.R."/>
            <person name="Kodira C.D."/>
            <person name="Leon-Narvaez H."/>
            <person name="Longo L.V.G."/>
            <person name="Ma L.-J."/>
            <person name="Malavazi I."/>
            <person name="Matsuo A.L."/>
            <person name="Morais F.V."/>
            <person name="Pereira M."/>
            <person name="Rodriguez-Brito S."/>
            <person name="Sakthikumar S."/>
            <person name="Salem-Izacc S.M."/>
            <person name="Sykes S.M."/>
            <person name="Teixeira M.M."/>
            <person name="Vallejo M.C."/>
            <person name="Walter M.E."/>
            <person name="Yandava C."/>
            <person name="Young S."/>
            <person name="Zeng Q."/>
            <person name="Zucker J."/>
            <person name="Felipe M.S."/>
            <person name="Goldman G.H."/>
            <person name="Haas B.J."/>
            <person name="McEwen J.G."/>
            <person name="Nino-Vega G."/>
            <person name="Puccia R."/>
            <person name="San-Blas G."/>
            <person name="Soares C.M."/>
            <person name="Birren B.W."/>
            <person name="Cuomo C.A."/>
        </authorList>
    </citation>
    <scope>NUCLEOTIDE SEQUENCE [LARGE SCALE GENOMIC DNA]</scope>
    <source>
        <strain>Pb03</strain>
    </source>
</reference>
<name>GUF1_PARBP</name>
<protein>
    <recommendedName>
        <fullName evidence="1">Translation factor GUF1, mitochondrial</fullName>
        <ecNumber>3.6.5.-</ecNumber>
    </recommendedName>
    <alternativeName>
        <fullName evidence="1">Elongation factor 4 homolog</fullName>
        <shortName evidence="1">EF-4</shortName>
    </alternativeName>
    <alternativeName>
        <fullName evidence="1">GTPase GUF1</fullName>
    </alternativeName>
    <alternativeName>
        <fullName evidence="1">Ribosomal back-translocase</fullName>
    </alternativeName>
</protein>
<sequence length="658" mass="73404">MRGCLQTVRWLTSAWQRPPSYPPLSRAAPCRFFNVSIPRNAQSRKPVSDLERRIAAIPIDRFRNFCIVAHVDHGKSTLSDRLLELTGTIQPGGNKQVLDKLDVERERGITVKAQTCTMLYNYRGEDYLLHLVDTPGHVDFRAEVSRSYASCGGALLLVDASQGVQAQTVANFYLAFAEGLKLVPVINKVDLPSADPVRALDQMANTFELDPKTAVLVSAKTGLNVEQLLPTVVEQIPAPVGDHTKPLRMLLVDSWYSTYKGVILLVRIFDGEVRAGDHVGSLATGLKYHVGEVGIMYPGQTAQSVLRAGQVGYIYFNPAMKRSQEAKVGDTYTKVGSEKLIEPLPGFEEPKSMVFVAAYPVDASDFPHLEDSINQLLLNDRSITLQKESSEALGAGFRLGFLGTLHCSVFEDRLRQEHGASIIITPPTVPFKVIWKDGKEEIITNPALFPEEDALRAKVVELQEPFVLATLTFPEEYLGRVIELCESNRGEQKSLEFFTATQVILKYELPLAQLVDDFFGKLKGSTKGYASLDYEESGWRRSSIAKLQLLVNKVPVDAVSRVVHSSQVQKLGRVWVSKFKEHVDRQMFEVVIQAAVGRNIVARETIKPFRKDVLQKLHAADVTRRRKLLEKQKEGRKKLKAVGNVVIEHKAFQAFLAK</sequence>
<feature type="transit peptide" description="Mitochondrion" evidence="1">
    <location>
        <begin position="1"/>
        <end position="40"/>
    </location>
</feature>
<feature type="chain" id="PRO_0000402896" description="Translation factor GUF1, mitochondrial">
    <location>
        <begin position="41"/>
        <end position="658"/>
    </location>
</feature>
<feature type="domain" description="tr-type G">
    <location>
        <begin position="60"/>
        <end position="240"/>
    </location>
</feature>
<feature type="binding site" evidence="1">
    <location>
        <begin position="69"/>
        <end position="76"/>
    </location>
    <ligand>
        <name>GTP</name>
        <dbReference type="ChEBI" id="CHEBI:37565"/>
    </ligand>
</feature>
<feature type="binding site" evidence="1">
    <location>
        <begin position="133"/>
        <end position="137"/>
    </location>
    <ligand>
        <name>GTP</name>
        <dbReference type="ChEBI" id="CHEBI:37565"/>
    </ligand>
</feature>
<feature type="binding site" evidence="1">
    <location>
        <begin position="187"/>
        <end position="190"/>
    </location>
    <ligand>
        <name>GTP</name>
        <dbReference type="ChEBI" id="CHEBI:37565"/>
    </ligand>
</feature>
<keyword id="KW-0342">GTP-binding</keyword>
<keyword id="KW-0378">Hydrolase</keyword>
<keyword id="KW-0472">Membrane</keyword>
<keyword id="KW-0496">Mitochondrion</keyword>
<keyword id="KW-0999">Mitochondrion inner membrane</keyword>
<keyword id="KW-0547">Nucleotide-binding</keyword>
<keyword id="KW-0648">Protein biosynthesis</keyword>
<keyword id="KW-0809">Transit peptide</keyword>
<evidence type="ECO:0000255" key="1">
    <source>
        <dbReference type="HAMAP-Rule" id="MF_03137"/>
    </source>
</evidence>
<evidence type="ECO:0000305" key="2"/>
<dbReference type="EC" id="3.6.5.-"/>
<dbReference type="EMBL" id="KN305545">
    <property type="protein sequence ID" value="EEH17003.1"/>
    <property type="molecule type" value="Genomic_DNA"/>
</dbReference>
<dbReference type="SMR" id="C0SHD5"/>
<dbReference type="VEuPathDB" id="FungiDB:PABG_07090"/>
<dbReference type="HOGENOM" id="CLU_009995_3_1_1"/>
<dbReference type="OrthoDB" id="11823at33183"/>
<dbReference type="GO" id="GO:0005743">
    <property type="term" value="C:mitochondrial inner membrane"/>
    <property type="evidence" value="ECO:0007669"/>
    <property type="project" value="UniProtKB-SubCell"/>
</dbReference>
<dbReference type="GO" id="GO:0005759">
    <property type="term" value="C:mitochondrial matrix"/>
    <property type="evidence" value="ECO:0007669"/>
    <property type="project" value="UniProtKB-UniRule"/>
</dbReference>
<dbReference type="GO" id="GO:0005525">
    <property type="term" value="F:GTP binding"/>
    <property type="evidence" value="ECO:0007669"/>
    <property type="project" value="UniProtKB-UniRule"/>
</dbReference>
<dbReference type="GO" id="GO:0003924">
    <property type="term" value="F:GTPase activity"/>
    <property type="evidence" value="ECO:0007669"/>
    <property type="project" value="UniProtKB-UniRule"/>
</dbReference>
<dbReference type="GO" id="GO:0097177">
    <property type="term" value="F:mitochondrial ribosome binding"/>
    <property type="evidence" value="ECO:0007669"/>
    <property type="project" value="TreeGrafter"/>
</dbReference>
<dbReference type="GO" id="GO:0045727">
    <property type="term" value="P:positive regulation of translation"/>
    <property type="evidence" value="ECO:0007669"/>
    <property type="project" value="UniProtKB-UniRule"/>
</dbReference>
<dbReference type="GO" id="GO:0006412">
    <property type="term" value="P:translation"/>
    <property type="evidence" value="ECO:0007669"/>
    <property type="project" value="UniProtKB-KW"/>
</dbReference>
<dbReference type="CDD" id="cd03699">
    <property type="entry name" value="EF4_II"/>
    <property type="match status" value="1"/>
</dbReference>
<dbReference type="CDD" id="cd16260">
    <property type="entry name" value="EF4_III"/>
    <property type="match status" value="1"/>
</dbReference>
<dbReference type="CDD" id="cd01890">
    <property type="entry name" value="LepA"/>
    <property type="match status" value="1"/>
</dbReference>
<dbReference type="CDD" id="cd03709">
    <property type="entry name" value="lepA_C"/>
    <property type="match status" value="1"/>
</dbReference>
<dbReference type="FunFam" id="3.40.50.300:FF:000078">
    <property type="entry name" value="Elongation factor 4"/>
    <property type="match status" value="1"/>
</dbReference>
<dbReference type="FunFam" id="2.40.30.10:FF:000015">
    <property type="entry name" value="Translation factor GUF1, mitochondrial"/>
    <property type="match status" value="1"/>
</dbReference>
<dbReference type="FunFam" id="3.30.70.240:FF:000007">
    <property type="entry name" value="Translation factor GUF1, mitochondrial"/>
    <property type="match status" value="1"/>
</dbReference>
<dbReference type="FunFam" id="3.30.70.2570:FF:000001">
    <property type="entry name" value="Translation factor GUF1, mitochondrial"/>
    <property type="match status" value="1"/>
</dbReference>
<dbReference type="FunFam" id="3.30.70.870:FF:000004">
    <property type="entry name" value="Translation factor GUF1, mitochondrial"/>
    <property type="match status" value="1"/>
</dbReference>
<dbReference type="Gene3D" id="3.30.70.240">
    <property type="match status" value="1"/>
</dbReference>
<dbReference type="Gene3D" id="3.30.70.2570">
    <property type="entry name" value="Elongation factor 4, C-terminal domain"/>
    <property type="match status" value="1"/>
</dbReference>
<dbReference type="Gene3D" id="3.30.70.870">
    <property type="entry name" value="Elongation Factor G (Translational Gtpase), domain 3"/>
    <property type="match status" value="1"/>
</dbReference>
<dbReference type="Gene3D" id="3.40.50.300">
    <property type="entry name" value="P-loop containing nucleotide triphosphate hydrolases"/>
    <property type="match status" value="1"/>
</dbReference>
<dbReference type="Gene3D" id="2.40.30.10">
    <property type="entry name" value="Translation factors"/>
    <property type="match status" value="1"/>
</dbReference>
<dbReference type="HAMAP" id="MF_00071">
    <property type="entry name" value="LepA"/>
    <property type="match status" value="1"/>
</dbReference>
<dbReference type="InterPro" id="IPR006297">
    <property type="entry name" value="EF-4"/>
</dbReference>
<dbReference type="InterPro" id="IPR035647">
    <property type="entry name" value="EFG_III/V"/>
</dbReference>
<dbReference type="InterPro" id="IPR000640">
    <property type="entry name" value="EFG_V-like"/>
</dbReference>
<dbReference type="InterPro" id="IPR031157">
    <property type="entry name" value="G_TR_CS"/>
</dbReference>
<dbReference type="InterPro" id="IPR038363">
    <property type="entry name" value="LepA_C_sf"/>
</dbReference>
<dbReference type="InterPro" id="IPR013842">
    <property type="entry name" value="LepA_CTD"/>
</dbReference>
<dbReference type="InterPro" id="IPR035654">
    <property type="entry name" value="LepA_IV"/>
</dbReference>
<dbReference type="InterPro" id="IPR027417">
    <property type="entry name" value="P-loop_NTPase"/>
</dbReference>
<dbReference type="InterPro" id="IPR005225">
    <property type="entry name" value="Small_GTP-bd"/>
</dbReference>
<dbReference type="InterPro" id="IPR000795">
    <property type="entry name" value="T_Tr_GTP-bd_dom"/>
</dbReference>
<dbReference type="InterPro" id="IPR009000">
    <property type="entry name" value="Transl_B-barrel_sf"/>
</dbReference>
<dbReference type="NCBIfam" id="TIGR01393">
    <property type="entry name" value="lepA"/>
    <property type="match status" value="1"/>
</dbReference>
<dbReference type="NCBIfam" id="TIGR00231">
    <property type="entry name" value="small_GTP"/>
    <property type="match status" value="1"/>
</dbReference>
<dbReference type="PANTHER" id="PTHR43512:SF7">
    <property type="entry name" value="TRANSLATION FACTOR GUF1, MITOCHONDRIAL"/>
    <property type="match status" value="1"/>
</dbReference>
<dbReference type="PANTHER" id="PTHR43512">
    <property type="entry name" value="TRANSLATION FACTOR GUF1-RELATED"/>
    <property type="match status" value="1"/>
</dbReference>
<dbReference type="Pfam" id="PF00679">
    <property type="entry name" value="EFG_C"/>
    <property type="match status" value="1"/>
</dbReference>
<dbReference type="Pfam" id="PF00009">
    <property type="entry name" value="GTP_EFTU"/>
    <property type="match status" value="1"/>
</dbReference>
<dbReference type="Pfam" id="PF06421">
    <property type="entry name" value="LepA_C"/>
    <property type="match status" value="1"/>
</dbReference>
<dbReference type="PRINTS" id="PR00315">
    <property type="entry name" value="ELONGATNFCT"/>
</dbReference>
<dbReference type="SUPFAM" id="SSF54980">
    <property type="entry name" value="EF-G C-terminal domain-like"/>
    <property type="match status" value="2"/>
</dbReference>
<dbReference type="SUPFAM" id="SSF52540">
    <property type="entry name" value="P-loop containing nucleoside triphosphate hydrolases"/>
    <property type="match status" value="1"/>
</dbReference>
<dbReference type="SUPFAM" id="SSF50447">
    <property type="entry name" value="Translation proteins"/>
    <property type="match status" value="1"/>
</dbReference>
<dbReference type="PROSITE" id="PS00301">
    <property type="entry name" value="G_TR_1"/>
    <property type="match status" value="1"/>
</dbReference>
<dbReference type="PROSITE" id="PS51722">
    <property type="entry name" value="G_TR_2"/>
    <property type="match status" value="1"/>
</dbReference>
<gene>
    <name evidence="1" type="primary">GUF1</name>
    <name type="ORF">PABG_07090</name>
</gene>
<proteinExistence type="inferred from homology"/>
<organism>
    <name type="scientific">Paracoccidioides brasiliensis (strain Pb03)</name>
    <dbReference type="NCBI Taxonomy" id="482561"/>
    <lineage>
        <taxon>Eukaryota</taxon>
        <taxon>Fungi</taxon>
        <taxon>Dikarya</taxon>
        <taxon>Ascomycota</taxon>
        <taxon>Pezizomycotina</taxon>
        <taxon>Eurotiomycetes</taxon>
        <taxon>Eurotiomycetidae</taxon>
        <taxon>Onygenales</taxon>
        <taxon>Ajellomycetaceae</taxon>
        <taxon>Paracoccidioides</taxon>
    </lineage>
</organism>